<dbReference type="EMBL" id="CP000634">
    <property type="protein sequence ID" value="ACM38858.1"/>
    <property type="molecule type" value="Genomic_DNA"/>
</dbReference>
<dbReference type="RefSeq" id="WP_012654100.1">
    <property type="nucleotide sequence ID" value="NC_011988.1"/>
</dbReference>
<dbReference type="SMR" id="B9K1W0"/>
<dbReference type="STRING" id="311402.Avi_5795"/>
<dbReference type="KEGG" id="avi:Avi_5795"/>
<dbReference type="eggNOG" id="COG3705">
    <property type="taxonomic scope" value="Bacteria"/>
</dbReference>
<dbReference type="HOGENOM" id="CLU_025113_6_0_5"/>
<dbReference type="UniPathway" id="UPA00031">
    <property type="reaction ID" value="UER00006"/>
</dbReference>
<dbReference type="Proteomes" id="UP000001596">
    <property type="component" value="Chromosome 2"/>
</dbReference>
<dbReference type="GO" id="GO:0005737">
    <property type="term" value="C:cytoplasm"/>
    <property type="evidence" value="ECO:0007669"/>
    <property type="project" value="UniProtKB-SubCell"/>
</dbReference>
<dbReference type="GO" id="GO:0004821">
    <property type="term" value="F:histidine-tRNA ligase activity"/>
    <property type="evidence" value="ECO:0007669"/>
    <property type="project" value="TreeGrafter"/>
</dbReference>
<dbReference type="GO" id="GO:0006427">
    <property type="term" value="P:histidyl-tRNA aminoacylation"/>
    <property type="evidence" value="ECO:0007669"/>
    <property type="project" value="TreeGrafter"/>
</dbReference>
<dbReference type="GO" id="GO:0000105">
    <property type="term" value="P:L-histidine biosynthetic process"/>
    <property type="evidence" value="ECO:0007669"/>
    <property type="project" value="UniProtKB-UniRule"/>
</dbReference>
<dbReference type="Gene3D" id="3.30.930.10">
    <property type="entry name" value="Bira Bifunctional Protein, Domain 2"/>
    <property type="match status" value="1"/>
</dbReference>
<dbReference type="HAMAP" id="MF_00125">
    <property type="entry name" value="HisZ"/>
    <property type="match status" value="1"/>
</dbReference>
<dbReference type="InterPro" id="IPR006195">
    <property type="entry name" value="aa-tRNA-synth_II"/>
</dbReference>
<dbReference type="InterPro" id="IPR045864">
    <property type="entry name" value="aa-tRNA-synth_II/BPL/LPL"/>
</dbReference>
<dbReference type="InterPro" id="IPR041715">
    <property type="entry name" value="HisRS-like_core"/>
</dbReference>
<dbReference type="InterPro" id="IPR004516">
    <property type="entry name" value="HisRS/HisZ"/>
</dbReference>
<dbReference type="InterPro" id="IPR004517">
    <property type="entry name" value="HisZ"/>
</dbReference>
<dbReference type="NCBIfam" id="NF008951">
    <property type="entry name" value="PRK12295.1-4"/>
    <property type="match status" value="1"/>
</dbReference>
<dbReference type="PANTHER" id="PTHR43707:SF1">
    <property type="entry name" value="HISTIDINE--TRNA LIGASE, MITOCHONDRIAL-RELATED"/>
    <property type="match status" value="1"/>
</dbReference>
<dbReference type="PANTHER" id="PTHR43707">
    <property type="entry name" value="HISTIDYL-TRNA SYNTHETASE"/>
    <property type="match status" value="1"/>
</dbReference>
<dbReference type="Pfam" id="PF13393">
    <property type="entry name" value="tRNA-synt_His"/>
    <property type="match status" value="2"/>
</dbReference>
<dbReference type="PIRSF" id="PIRSF001549">
    <property type="entry name" value="His-tRNA_synth"/>
    <property type="match status" value="1"/>
</dbReference>
<dbReference type="SUPFAM" id="SSF55681">
    <property type="entry name" value="Class II aaRS and biotin synthetases"/>
    <property type="match status" value="1"/>
</dbReference>
<dbReference type="PROSITE" id="PS50862">
    <property type="entry name" value="AA_TRNA_LIGASE_II"/>
    <property type="match status" value="1"/>
</dbReference>
<name>HISZ_ALLAM</name>
<proteinExistence type="inferred from homology"/>
<gene>
    <name evidence="1" type="primary">hisZ</name>
    <name type="ordered locus">Avi_5795</name>
</gene>
<reference key="1">
    <citation type="journal article" date="2009" name="J. Bacteriol.">
        <title>Genome sequences of three Agrobacterium biovars help elucidate the evolution of multichromosome genomes in bacteria.</title>
        <authorList>
            <person name="Slater S.C."/>
            <person name="Goldman B.S."/>
            <person name="Goodner B."/>
            <person name="Setubal J.C."/>
            <person name="Farrand S.K."/>
            <person name="Nester E.W."/>
            <person name="Burr T.J."/>
            <person name="Banta L."/>
            <person name="Dickerman A.W."/>
            <person name="Paulsen I."/>
            <person name="Otten L."/>
            <person name="Suen G."/>
            <person name="Welch R."/>
            <person name="Almeida N.F."/>
            <person name="Arnold F."/>
            <person name="Burton O.T."/>
            <person name="Du Z."/>
            <person name="Ewing A."/>
            <person name="Godsy E."/>
            <person name="Heisel S."/>
            <person name="Houmiel K.L."/>
            <person name="Jhaveri J."/>
            <person name="Lu J."/>
            <person name="Miller N.M."/>
            <person name="Norton S."/>
            <person name="Chen Q."/>
            <person name="Phoolcharoen W."/>
            <person name="Ohlin V."/>
            <person name="Ondrusek D."/>
            <person name="Pride N."/>
            <person name="Stricklin S.L."/>
            <person name="Sun J."/>
            <person name="Wheeler C."/>
            <person name="Wilson L."/>
            <person name="Zhu H."/>
            <person name="Wood D.W."/>
        </authorList>
    </citation>
    <scope>NUCLEOTIDE SEQUENCE [LARGE SCALE GENOMIC DNA]</scope>
    <source>
        <strain>ATCC BAA-846 / DSM 112012 / S4</strain>
    </source>
</reference>
<organism>
    <name type="scientific">Allorhizobium ampelinum (strain ATCC BAA-846 / DSM 112012 / S4)</name>
    <name type="common">Agrobacterium vitis (strain S4)</name>
    <dbReference type="NCBI Taxonomy" id="311402"/>
    <lineage>
        <taxon>Bacteria</taxon>
        <taxon>Pseudomonadati</taxon>
        <taxon>Pseudomonadota</taxon>
        <taxon>Alphaproteobacteria</taxon>
        <taxon>Hyphomicrobiales</taxon>
        <taxon>Rhizobiaceae</taxon>
        <taxon>Rhizobium/Agrobacterium group</taxon>
        <taxon>Allorhizobium</taxon>
        <taxon>Allorhizobium ampelinum</taxon>
    </lineage>
</organism>
<feature type="chain" id="PRO_1000122658" description="ATP phosphoribosyltransferase regulatory subunit">
    <location>
        <begin position="1"/>
        <end position="372"/>
    </location>
</feature>
<keyword id="KW-0028">Amino-acid biosynthesis</keyword>
<keyword id="KW-0963">Cytoplasm</keyword>
<keyword id="KW-0368">Histidine biosynthesis</keyword>
<keyword id="KW-1185">Reference proteome</keyword>
<evidence type="ECO:0000255" key="1">
    <source>
        <dbReference type="HAMAP-Rule" id="MF_00125"/>
    </source>
</evidence>
<comment type="function">
    <text evidence="1">Required for the first step of histidine biosynthesis. May allow the feedback regulation of ATP phosphoribosyltransferase activity by histidine.</text>
</comment>
<comment type="pathway">
    <text evidence="1">Amino-acid biosynthesis; L-histidine biosynthesis; L-histidine from 5-phospho-alpha-D-ribose 1-diphosphate: step 1/9.</text>
</comment>
<comment type="subunit">
    <text evidence="1">Heteromultimer composed of HisG and HisZ subunits.</text>
</comment>
<comment type="subcellular location">
    <subcellularLocation>
        <location evidence="1">Cytoplasm</location>
    </subcellularLocation>
</comment>
<comment type="miscellaneous">
    <text>This function is generally fulfilled by the C-terminal part of HisG, which is missing in some bacteria such as this one.</text>
</comment>
<comment type="similarity">
    <text evidence="1">Belongs to the class-II aminoacyl-tRNA synthetase family. HisZ subfamily.</text>
</comment>
<sequence>MPLINMPDFAGALLDDFAARGAARVDTPVIQPAEPFLDMAGEDLRRRIFLTESETGESLCLRPEFTIPVCLSHIENATGTPKRYAYLGEVFRQRREGGNEFYQAGIEDLGEPATARADARAINDAIGILHKLLPGRPLTVMLGDQAVFEAVVKTLGLPSGWQRRLIQAFGDSTHLDQLLKTLASPQTAHGLDPAVEALLSSGDEAGLIAHLDRTMEDTGYSTNASRSPREIAARLKEKLALAETRLDGAALLLLREFLSLELPLSEATAALAGFADAAGLSLGAALDGFEARIAALADLGVDLSRITYRAAFGRPLDYYTGLVFEVALSGETAVLAGGGRFDRLLTLLGAKHTIPAVGFSLWLDRIELARAR</sequence>
<protein>
    <recommendedName>
        <fullName evidence="1">ATP phosphoribosyltransferase regulatory subunit</fullName>
    </recommendedName>
</protein>
<accession>B9K1W0</accession>